<evidence type="ECO:0000250" key="1"/>
<evidence type="ECO:0000255" key="2"/>
<evidence type="ECO:0000305" key="3"/>
<name>DF115_ARATH</name>
<reference key="1">
    <citation type="journal article" date="2000" name="DNA Res.">
        <title>Structural analysis of Arabidopsis thaliana chromosome 5. X. Sequence features of the regions of 3,076,755 bp covered by sixty P1 and TAC clones.</title>
        <authorList>
            <person name="Sato S."/>
            <person name="Nakamura Y."/>
            <person name="Kaneko T."/>
            <person name="Katoh T."/>
            <person name="Asamizu E."/>
            <person name="Kotani H."/>
            <person name="Tabata S."/>
        </authorList>
    </citation>
    <scope>NUCLEOTIDE SEQUENCE [LARGE SCALE GENOMIC DNA]</scope>
    <source>
        <strain>cv. Columbia</strain>
    </source>
</reference>
<reference key="2">
    <citation type="journal article" date="2017" name="Plant J.">
        <title>Araport11: a complete reannotation of the Arabidopsis thaliana reference genome.</title>
        <authorList>
            <person name="Cheng C.Y."/>
            <person name="Krishnakumar V."/>
            <person name="Chan A.P."/>
            <person name="Thibaud-Nissen F."/>
            <person name="Schobel S."/>
            <person name="Town C.D."/>
        </authorList>
    </citation>
    <scope>GENOME REANNOTATION</scope>
    <source>
        <strain>cv. Columbia</strain>
    </source>
</reference>
<reference key="3">
    <citation type="journal article" date="2005" name="Plant Physiol.">
        <title>Genome organization of more than 300 defensin-like genes in Arabidopsis.</title>
        <authorList>
            <person name="Silverstein K.A.T."/>
            <person name="Graham M.A."/>
            <person name="Paape T.D."/>
            <person name="VandenBosch K.A."/>
        </authorList>
    </citation>
    <scope>GENE FAMILY</scope>
</reference>
<comment type="subcellular location">
    <subcellularLocation>
        <location evidence="1">Secreted</location>
    </subcellularLocation>
</comment>
<comment type="similarity">
    <text evidence="3">Belongs to the DEFL family.</text>
</comment>
<protein>
    <recommendedName>
        <fullName>Defensin-like protein 115</fullName>
    </recommendedName>
</protein>
<sequence length="81" mass="8940">MAITKKMLVVFLLAFLFVTSSVHCSDSTLGIGINQDWKKCFSPDPCKKAGTQGCMEFCRTISFLLFGECTSKPDQCCCVTK</sequence>
<dbReference type="EMBL" id="AB023032">
    <property type="status" value="NOT_ANNOTATED_CDS"/>
    <property type="molecule type" value="Genomic_DNA"/>
</dbReference>
<dbReference type="EMBL" id="CP002688">
    <property type="protein sequence ID" value="AED94784.1"/>
    <property type="molecule type" value="Genomic_DNA"/>
</dbReference>
<dbReference type="RefSeq" id="NP_001031995.1">
    <property type="nucleotide sequence ID" value="NM_001036918.2"/>
</dbReference>
<dbReference type="PaxDb" id="3702-AT5G42232.1"/>
<dbReference type="ProteomicsDB" id="224145"/>
<dbReference type="EnsemblPlants" id="AT5G42232.1">
    <property type="protein sequence ID" value="AT5G42232.1"/>
    <property type="gene ID" value="AT5G42232"/>
</dbReference>
<dbReference type="GeneID" id="3771401"/>
<dbReference type="Gramene" id="AT5G42232.1">
    <property type="protein sequence ID" value="AT5G42232.1"/>
    <property type="gene ID" value="AT5G42232"/>
</dbReference>
<dbReference type="KEGG" id="ath:AT5G42232"/>
<dbReference type="Araport" id="AT5G42232"/>
<dbReference type="TAIR" id="AT5G42232"/>
<dbReference type="HOGENOM" id="CLU_183259_1_0_1"/>
<dbReference type="InParanoid" id="Q2V321"/>
<dbReference type="OMA" id="MEFCRTI"/>
<dbReference type="OrthoDB" id="1055514at2759"/>
<dbReference type="PhylomeDB" id="Q2V321"/>
<dbReference type="PRO" id="PR:Q2V321"/>
<dbReference type="Proteomes" id="UP000006548">
    <property type="component" value="Chromosome 5"/>
</dbReference>
<dbReference type="ExpressionAtlas" id="Q2V321">
    <property type="expression patterns" value="baseline"/>
</dbReference>
<dbReference type="GO" id="GO:0005576">
    <property type="term" value="C:extracellular region"/>
    <property type="evidence" value="ECO:0007669"/>
    <property type="project" value="UniProtKB-SubCell"/>
</dbReference>
<dbReference type="GO" id="GO:0050832">
    <property type="term" value="P:defense response to fungus"/>
    <property type="evidence" value="ECO:0007669"/>
    <property type="project" value="UniProtKB-KW"/>
</dbReference>
<dbReference type="GO" id="GO:0031640">
    <property type="term" value="P:killing of cells of another organism"/>
    <property type="evidence" value="ECO:0007669"/>
    <property type="project" value="UniProtKB-KW"/>
</dbReference>
<keyword id="KW-0929">Antimicrobial</keyword>
<keyword id="KW-1015">Disulfide bond</keyword>
<keyword id="KW-0295">Fungicide</keyword>
<keyword id="KW-0611">Plant defense</keyword>
<keyword id="KW-1185">Reference proteome</keyword>
<keyword id="KW-0964">Secreted</keyword>
<keyword id="KW-0732">Signal</keyword>
<proteinExistence type="evidence at transcript level"/>
<organism>
    <name type="scientific">Arabidopsis thaliana</name>
    <name type="common">Mouse-ear cress</name>
    <dbReference type="NCBI Taxonomy" id="3702"/>
    <lineage>
        <taxon>Eukaryota</taxon>
        <taxon>Viridiplantae</taxon>
        <taxon>Streptophyta</taxon>
        <taxon>Embryophyta</taxon>
        <taxon>Tracheophyta</taxon>
        <taxon>Spermatophyta</taxon>
        <taxon>Magnoliopsida</taxon>
        <taxon>eudicotyledons</taxon>
        <taxon>Gunneridae</taxon>
        <taxon>Pentapetalae</taxon>
        <taxon>rosids</taxon>
        <taxon>malvids</taxon>
        <taxon>Brassicales</taxon>
        <taxon>Brassicaceae</taxon>
        <taxon>Camelineae</taxon>
        <taxon>Arabidopsis</taxon>
    </lineage>
</organism>
<feature type="signal peptide" evidence="2">
    <location>
        <begin position="1"/>
        <end position="24"/>
    </location>
</feature>
<feature type="chain" id="PRO_0000379677" description="Defensin-like protein 115">
    <location>
        <begin position="25"/>
        <end position="81"/>
    </location>
</feature>
<feature type="disulfide bond" evidence="1">
    <location>
        <begin position="40"/>
        <end position="78"/>
    </location>
</feature>
<feature type="disulfide bond" evidence="1">
    <location>
        <begin position="46"/>
        <end position="69"/>
    </location>
</feature>
<feature type="disulfide bond" evidence="1">
    <location>
        <begin position="54"/>
        <end position="76"/>
    </location>
</feature>
<feature type="disulfide bond" evidence="1">
    <location>
        <begin position="58"/>
        <end position="77"/>
    </location>
</feature>
<gene>
    <name type="ordered locus">At5g42232</name>
    <name type="ORF">K5J14</name>
</gene>
<accession>Q2V321</accession>